<organism>
    <name type="scientific">Mycolicibacterium goodii</name>
    <name type="common">Mycobacterium goodii</name>
    <dbReference type="NCBI Taxonomy" id="134601"/>
    <lineage>
        <taxon>Bacteria</taxon>
        <taxon>Bacillati</taxon>
        <taxon>Actinomycetota</taxon>
        <taxon>Actinomycetes</taxon>
        <taxon>Mycobacteriales</taxon>
        <taxon>Mycobacteriaceae</taxon>
        <taxon>Mycolicibacterium</taxon>
    </lineage>
</organism>
<name>DSZD_MYCGD</name>
<comment type="function">
    <text evidence="1">An NADH:FMN oxidoreductase which supplies reduced FMN for the '4S' desulfurization pathway that removes covalently bound sulfur from dibenzothiophene (DBT) without breaking carbon-carbon bonds. Can also use FAD. Provides DszC and probably also DszA (DBT-monooxygenase and DBTO2-monooxygenase respectively) with reduced flavin (FMN and/or FAD).</text>
</comment>
<comment type="catalytic activity">
    <reaction evidence="1">
        <text>FMNH2 + NAD(+) = FMN + NADH + 2 H(+)</text>
        <dbReference type="Rhea" id="RHEA:21620"/>
        <dbReference type="ChEBI" id="CHEBI:15378"/>
        <dbReference type="ChEBI" id="CHEBI:57540"/>
        <dbReference type="ChEBI" id="CHEBI:57618"/>
        <dbReference type="ChEBI" id="CHEBI:57945"/>
        <dbReference type="ChEBI" id="CHEBI:58210"/>
        <dbReference type="EC" id="1.5.1.42"/>
    </reaction>
</comment>
<comment type="catalytic activity">
    <reaction evidence="1">
        <text>FADH2 + NAD(+) = FAD + NADH + 2 H(+)</text>
        <dbReference type="Rhea" id="RHEA:30147"/>
        <dbReference type="ChEBI" id="CHEBI:15378"/>
        <dbReference type="ChEBI" id="CHEBI:57540"/>
        <dbReference type="ChEBI" id="CHEBI:57692"/>
        <dbReference type="ChEBI" id="CHEBI:57945"/>
        <dbReference type="ChEBI" id="CHEBI:58307"/>
        <dbReference type="EC" id="1.5.1.37"/>
    </reaction>
</comment>
<comment type="pathway">
    <text evidence="4">Sulfur metabolism; dibenzothiophene degradation.</text>
</comment>
<comment type="subcellular location">
    <subcellularLocation>
        <location evidence="3">Cytoplasm</location>
    </subcellularLocation>
</comment>
<comment type="similarity">
    <text evidence="3">Belongs to the non-flavoprotein flavin reductase family.</text>
</comment>
<evidence type="ECO:0000269" key="1">
    <source>
    </source>
</evidence>
<evidence type="ECO:0000303" key="2">
    <source>
    </source>
</evidence>
<evidence type="ECO:0000305" key="3"/>
<evidence type="ECO:0000305" key="4">
    <source>
    </source>
</evidence>
<evidence type="ECO:0007744" key="5">
    <source>
        <dbReference type="PDB" id="3PFT"/>
    </source>
</evidence>
<evidence type="ECO:0007829" key="6">
    <source>
        <dbReference type="PDB" id="3PFT"/>
    </source>
</evidence>
<feature type="chain" id="PRO_0000455400" description="NADH:FMN oxidoreductase">
    <location>
        <begin position="1"/>
        <end position="161"/>
    </location>
</feature>
<feature type="binding site" evidence="5">
    <location>
        <position position="30"/>
    </location>
    <ligand>
        <name>FMN</name>
        <dbReference type="ChEBI" id="CHEBI:58210"/>
    </ligand>
</feature>
<feature type="binding site" evidence="5">
    <location>
        <begin position="37"/>
        <end position="40"/>
    </location>
    <ligand>
        <name>FMN</name>
        <dbReference type="ChEBI" id="CHEBI:58210"/>
    </ligand>
</feature>
<feature type="binding site" evidence="5">
    <location>
        <begin position="54"/>
        <end position="61"/>
    </location>
    <ligand>
        <name>FMN</name>
        <dbReference type="ChEBI" id="CHEBI:58210"/>
    </ligand>
</feature>
<feature type="binding site" evidence="5">
    <location>
        <position position="88"/>
    </location>
    <ligand>
        <name>FMN</name>
        <dbReference type="ChEBI" id="CHEBI:58210"/>
    </ligand>
</feature>
<feature type="binding site" evidence="5">
    <location>
        <position position="94"/>
    </location>
    <ligand>
        <name>FMN</name>
        <dbReference type="ChEBI" id="CHEBI:58210"/>
    </ligand>
</feature>
<feature type="binding site" evidence="5">
    <location>
        <position position="151"/>
    </location>
    <ligand>
        <name>FMN</name>
        <dbReference type="ChEBI" id="CHEBI:58210"/>
    </ligand>
</feature>
<feature type="helix" evidence="6">
    <location>
        <begin position="8"/>
        <end position="16"/>
    </location>
</feature>
<feature type="strand" evidence="6">
    <location>
        <begin position="23"/>
        <end position="29"/>
    </location>
</feature>
<feature type="strand" evidence="6">
    <location>
        <begin position="32"/>
        <end position="39"/>
    </location>
</feature>
<feature type="strand" evidence="6">
    <location>
        <begin position="42"/>
        <end position="45"/>
    </location>
</feature>
<feature type="turn" evidence="6">
    <location>
        <begin position="46"/>
        <end position="49"/>
    </location>
</feature>
<feature type="strand" evidence="6">
    <location>
        <begin position="50"/>
        <end position="56"/>
    </location>
</feature>
<feature type="helix" evidence="6">
    <location>
        <begin position="62"/>
        <end position="65"/>
    </location>
</feature>
<feature type="strand" evidence="6">
    <location>
        <begin position="71"/>
        <end position="75"/>
    </location>
</feature>
<feature type="helix" evidence="6">
    <location>
        <begin position="81"/>
        <end position="88"/>
    </location>
</feature>
<feature type="strand" evidence="6">
    <location>
        <begin position="90"/>
        <end position="92"/>
    </location>
</feature>
<feature type="turn" evidence="6">
    <location>
        <begin position="94"/>
        <end position="97"/>
    </location>
</feature>
<feature type="strand" evidence="6">
    <location>
        <begin position="100"/>
        <end position="102"/>
    </location>
</feature>
<feature type="strand" evidence="6">
    <location>
        <begin position="106"/>
        <end position="110"/>
    </location>
</feature>
<feature type="strand" evidence="6">
    <location>
        <begin position="114"/>
        <end position="127"/>
    </location>
</feature>
<feature type="strand" evidence="6">
    <location>
        <begin position="130"/>
        <end position="142"/>
    </location>
</feature>
<feature type="strand" evidence="6">
    <location>
        <begin position="148"/>
        <end position="152"/>
    </location>
</feature>
<feature type="strand" evidence="6">
    <location>
        <begin position="155"/>
        <end position="159"/>
    </location>
</feature>
<proteinExistence type="evidence at protein level"/>
<sequence length="161" mass="16879">MSATDLSPTSLREAFGHFPSGVIAIAAEVDGTRVGLAASTFVPVSLEPPLVAFCVQNSSTTWPKLKDLPSLGISVLGEAHDTAARTLAAKTGDRFAGLETESRDSGAVFINGTSVWLESAIEQLVPAGDHTIVVLRVSDIVINEAVPPIVFHRSAFRKLGA</sequence>
<keyword id="KW-0002">3D-structure</keyword>
<keyword id="KW-0963">Cytoplasm</keyword>
<keyword id="KW-0274">FAD</keyword>
<keyword id="KW-0285">Flavoprotein</keyword>
<keyword id="KW-0288">FMN</keyword>
<keyword id="KW-0547">Nucleotide-binding</keyword>
<keyword id="KW-0560">Oxidoreductase</keyword>
<reference key="1">
    <citation type="journal article" date="2009" name="Bioresour. Technol.">
        <title>Both FMNH2 and FADH2 can be utilized by the dibenzothiophene monooxygenase from a desulfurizing bacterium Mycobacterium goodii X7B.</title>
        <authorList>
            <person name="Li J."/>
            <person name="Feng J."/>
            <person name="Li Q."/>
            <person name="Ma C."/>
            <person name="Yu B."/>
            <person name="Gao C."/>
            <person name="Wu G."/>
            <person name="Xu P."/>
        </authorList>
    </citation>
    <scope>NUCLEOTIDE SEQUENCE [GENOMIC DNA]</scope>
    <scope>FUNCTION</scope>
    <scope>CATALYTIC ACTIVITY</scope>
    <scope>PATHWAY</scope>
    <source>
        <strain>X7B</strain>
    </source>
</reference>
<reference key="2">
    <citation type="journal article" date="2015" name="J. Biotechnol.">
        <title>Complete genome sequence of Mycobacterium goodii X7B, a facultative thermophilic biodesulfurizing bacterium with industrial potential.</title>
        <authorList>
            <person name="Yu B."/>
            <person name="Tao F."/>
            <person name="Li F."/>
            <person name="Hou J."/>
            <person name="Tang H."/>
            <person name="Ma C."/>
            <person name="Xu P."/>
        </authorList>
    </citation>
    <scope>NUCLEOTIDE SEQUENCE [LARGE SCALE GENOMIC DNA]</scope>
    <source>
        <strain>X7B</strain>
    </source>
</reference>
<reference evidence="5" key="3">
    <citation type="submission" date="2010-10" db="PDB data bank">
        <title>The flavin reductase DSZD from a desulfurizing mycobacterium goodii strain: systemic manipulation and investigation based on the crystal structure.</title>
        <authorList>
            <person name="Li Q."/>
            <person name="Xu P."/>
            <person name="Ma C."/>
            <person name="Gu L."/>
            <person name="Liu X."/>
            <person name="Zhang C."/>
            <person name="Li N."/>
            <person name="Su J."/>
            <person name="Li B."/>
            <person name="Liu S."/>
        </authorList>
    </citation>
    <scope>X-RAY CRYSTALLOGRAPHY (1.60 ANGSTROMS) OF 5-161 IN COMPLEX WITH FMN</scope>
</reference>
<accession>B6CDL6</accession>
<protein>
    <recommendedName>
        <fullName>NADH:FMN oxidoreductase</fullName>
        <ecNumber evidence="1">1.5.1.37</ecNumber>
        <ecNumber evidence="1">1.5.1.42</ecNumber>
    </recommendedName>
    <alternativeName>
        <fullName>FAD reductase (NADH)</fullName>
    </alternativeName>
    <alternativeName>
        <fullName>FMN reductase</fullName>
    </alternativeName>
    <alternativeName>
        <fullName evidence="2">Flavin reductase</fullName>
    </alternativeName>
</protein>
<gene>
    <name evidence="2" type="primary">dszD</name>
    <name type="ORF">AFA91_09010</name>
</gene>
<dbReference type="EC" id="1.5.1.37" evidence="1"/>
<dbReference type="EC" id="1.5.1.42" evidence="1"/>
<dbReference type="EMBL" id="EU154996">
    <property type="protein sequence ID" value="ABX11274.1"/>
    <property type="molecule type" value="Genomic_DNA"/>
</dbReference>
<dbReference type="EMBL" id="CP012150">
    <property type="protein sequence ID" value="AKS31988.1"/>
    <property type="molecule type" value="Genomic_DNA"/>
</dbReference>
<dbReference type="RefSeq" id="WP_049744407.1">
    <property type="nucleotide sequence ID" value="NZ_CP012150.1"/>
</dbReference>
<dbReference type="PDB" id="3PFT">
    <property type="method" value="X-ray"/>
    <property type="resolution" value="1.60 A"/>
    <property type="chains" value="A/B=5-161"/>
</dbReference>
<dbReference type="PDBsum" id="3PFT"/>
<dbReference type="SMR" id="B6CDL6"/>
<dbReference type="STRING" id="134601.AFA91_09010"/>
<dbReference type="KEGG" id="mgo:AFA91_09010"/>
<dbReference type="PATRIC" id="fig|134601.6.peg.1871"/>
<dbReference type="OrthoDB" id="9792858at2"/>
<dbReference type="UniPathway" id="UPA00346"/>
<dbReference type="EvolutionaryTrace" id="B6CDL6"/>
<dbReference type="Proteomes" id="UP000062255">
    <property type="component" value="Chromosome"/>
</dbReference>
<dbReference type="GO" id="GO:0005737">
    <property type="term" value="C:cytoplasm"/>
    <property type="evidence" value="ECO:0007669"/>
    <property type="project" value="UniProtKB-SubCell"/>
</dbReference>
<dbReference type="GO" id="GO:0010181">
    <property type="term" value="F:FMN binding"/>
    <property type="evidence" value="ECO:0007669"/>
    <property type="project" value="InterPro"/>
</dbReference>
<dbReference type="GO" id="GO:0042602">
    <property type="term" value="F:riboflavin reductase (NADPH) activity"/>
    <property type="evidence" value="ECO:0007669"/>
    <property type="project" value="TreeGrafter"/>
</dbReference>
<dbReference type="GO" id="GO:0018896">
    <property type="term" value="P:dibenzothiophene catabolic process"/>
    <property type="evidence" value="ECO:0007669"/>
    <property type="project" value="UniProtKB-UniPathway"/>
</dbReference>
<dbReference type="Gene3D" id="2.30.110.10">
    <property type="entry name" value="Electron Transport, Fmn-binding Protein, Chain A"/>
    <property type="match status" value="1"/>
</dbReference>
<dbReference type="InterPro" id="IPR002563">
    <property type="entry name" value="Flavin_Rdtase-like_dom"/>
</dbReference>
<dbReference type="InterPro" id="IPR050268">
    <property type="entry name" value="NADH-dep_flavin_reductase"/>
</dbReference>
<dbReference type="InterPro" id="IPR012349">
    <property type="entry name" value="Split_barrel_FMN-bd"/>
</dbReference>
<dbReference type="PANTHER" id="PTHR30466">
    <property type="entry name" value="FLAVIN REDUCTASE"/>
    <property type="match status" value="1"/>
</dbReference>
<dbReference type="PANTHER" id="PTHR30466:SF11">
    <property type="entry name" value="FLAVIN-DEPENDENT MONOOXYGENASE, REDUCTASE SUBUNIT HSAB"/>
    <property type="match status" value="1"/>
</dbReference>
<dbReference type="Pfam" id="PF01613">
    <property type="entry name" value="Flavin_Reduct"/>
    <property type="match status" value="1"/>
</dbReference>
<dbReference type="SMART" id="SM00903">
    <property type="entry name" value="Flavin_Reduct"/>
    <property type="match status" value="1"/>
</dbReference>
<dbReference type="SUPFAM" id="SSF50475">
    <property type="entry name" value="FMN-binding split barrel"/>
    <property type="match status" value="1"/>
</dbReference>